<protein>
    <recommendedName>
        <fullName>Peptide-N(4)-(N-acetyl-beta-glucosaminyl)asparagine amidase</fullName>
        <shortName>PNGase</shortName>
        <ecNumber>3.5.1.52</ecNumber>
    </recommendedName>
    <alternativeName>
        <fullName>Peptide:N-glycanase 1</fullName>
    </alternativeName>
</protein>
<dbReference type="EC" id="3.5.1.52"/>
<dbReference type="EMBL" id="CR382137">
    <property type="protein sequence ID" value="CAG88507.2"/>
    <property type="molecule type" value="Genomic_DNA"/>
</dbReference>
<dbReference type="RefSeq" id="XP_460234.2">
    <property type="nucleotide sequence ID" value="XM_460234.1"/>
</dbReference>
<dbReference type="SMR" id="Q6BNI6"/>
<dbReference type="FunCoup" id="Q6BNI6">
    <property type="interactions" value="101"/>
</dbReference>
<dbReference type="STRING" id="284592.Q6BNI6"/>
<dbReference type="GeneID" id="2902821"/>
<dbReference type="KEGG" id="dha:DEHA2E21384g"/>
<dbReference type="VEuPathDB" id="FungiDB:DEHA2E21384g"/>
<dbReference type="eggNOG" id="KOG0909">
    <property type="taxonomic scope" value="Eukaryota"/>
</dbReference>
<dbReference type="HOGENOM" id="CLU_031058_0_1_1"/>
<dbReference type="InParanoid" id="Q6BNI6"/>
<dbReference type="OMA" id="NDFFTWI"/>
<dbReference type="OrthoDB" id="409136at2759"/>
<dbReference type="Proteomes" id="UP000000599">
    <property type="component" value="Chromosome E"/>
</dbReference>
<dbReference type="GO" id="GO:0005829">
    <property type="term" value="C:cytosol"/>
    <property type="evidence" value="ECO:0007669"/>
    <property type="project" value="EnsemblFungi"/>
</dbReference>
<dbReference type="GO" id="GO:0005634">
    <property type="term" value="C:nucleus"/>
    <property type="evidence" value="ECO:0007669"/>
    <property type="project" value="EnsemblFungi"/>
</dbReference>
<dbReference type="GO" id="GO:0120125">
    <property type="term" value="C:PNGase complex"/>
    <property type="evidence" value="ECO:0007669"/>
    <property type="project" value="EnsemblFungi"/>
</dbReference>
<dbReference type="GO" id="GO:0046872">
    <property type="term" value="F:metal ion binding"/>
    <property type="evidence" value="ECO:0007669"/>
    <property type="project" value="UniProtKB-KW"/>
</dbReference>
<dbReference type="GO" id="GO:0000224">
    <property type="term" value="F:peptide-N4-(N-acetyl-beta-glucosaminyl)asparagine amidase activity"/>
    <property type="evidence" value="ECO:0007669"/>
    <property type="project" value="UniProtKB-EC"/>
</dbReference>
<dbReference type="GO" id="GO:0006515">
    <property type="term" value="P:protein quality control for misfolded or incompletely synthesized proteins"/>
    <property type="evidence" value="ECO:0007669"/>
    <property type="project" value="EnsemblFungi"/>
</dbReference>
<dbReference type="GO" id="GO:0097466">
    <property type="term" value="P:ubiquitin-dependent glycoprotein ERAD pathway"/>
    <property type="evidence" value="ECO:0007669"/>
    <property type="project" value="EnsemblFungi"/>
</dbReference>
<dbReference type="Gene3D" id="2.20.25.10">
    <property type="match status" value="1"/>
</dbReference>
<dbReference type="Gene3D" id="3.10.620.30">
    <property type="match status" value="1"/>
</dbReference>
<dbReference type="InterPro" id="IPR038765">
    <property type="entry name" value="Papain-like_cys_pep_sf"/>
</dbReference>
<dbReference type="InterPro" id="IPR050883">
    <property type="entry name" value="PNGase"/>
</dbReference>
<dbReference type="InterPro" id="IPR002931">
    <property type="entry name" value="Transglutaminase-like"/>
</dbReference>
<dbReference type="PANTHER" id="PTHR12143">
    <property type="entry name" value="PEPTIDE N-GLYCANASE PNGASE -RELATED"/>
    <property type="match status" value="1"/>
</dbReference>
<dbReference type="PANTHER" id="PTHR12143:SF19">
    <property type="entry name" value="PEPTIDE-N(4)-(N-ACETYL-BETA-GLUCOSAMINYL)ASPARAGINE AMIDASE"/>
    <property type="match status" value="1"/>
</dbReference>
<dbReference type="Pfam" id="PF01841">
    <property type="entry name" value="Transglut_core"/>
    <property type="match status" value="1"/>
</dbReference>
<dbReference type="SMART" id="SM00460">
    <property type="entry name" value="TGc"/>
    <property type="match status" value="1"/>
</dbReference>
<dbReference type="SUPFAM" id="SSF54001">
    <property type="entry name" value="Cysteine proteinases"/>
    <property type="match status" value="1"/>
</dbReference>
<keyword id="KW-0963">Cytoplasm</keyword>
<keyword id="KW-0378">Hydrolase</keyword>
<keyword id="KW-0479">Metal-binding</keyword>
<keyword id="KW-1185">Reference proteome</keyword>
<keyword id="KW-0862">Zinc</keyword>
<feature type="chain" id="PRO_0000248988" description="Peptide-N(4)-(N-acetyl-beta-glucosaminyl)asparagine amidase">
    <location>
        <begin position="1"/>
        <end position="375"/>
    </location>
</feature>
<feature type="region of interest" description="Disordered" evidence="2">
    <location>
        <begin position="345"/>
        <end position="375"/>
    </location>
</feature>
<feature type="compositionally biased region" description="Basic and acidic residues" evidence="2">
    <location>
        <begin position="364"/>
        <end position="375"/>
    </location>
</feature>
<feature type="active site" description="Nucleophile" evidence="1">
    <location>
        <position position="189"/>
    </location>
</feature>
<feature type="active site" evidence="1">
    <location>
        <position position="219"/>
    </location>
</feature>
<feature type="active site" evidence="1">
    <location>
        <position position="236"/>
    </location>
</feature>
<feature type="binding site" evidence="1">
    <location>
        <position position="129"/>
    </location>
    <ligand>
        <name>Zn(2+)</name>
        <dbReference type="ChEBI" id="CHEBI:29105"/>
    </ligand>
</feature>
<feature type="binding site" evidence="1">
    <location>
        <position position="132"/>
    </location>
    <ligand>
        <name>Zn(2+)</name>
        <dbReference type="ChEBI" id="CHEBI:29105"/>
    </ligand>
</feature>
<feature type="binding site" evidence="1">
    <location>
        <position position="163"/>
    </location>
    <ligand>
        <name>Zn(2+)</name>
        <dbReference type="ChEBI" id="CHEBI:29105"/>
    </ligand>
</feature>
<feature type="binding site" evidence="1">
    <location>
        <position position="166"/>
    </location>
    <ligand>
        <name>Zn(2+)</name>
        <dbReference type="ChEBI" id="CHEBI:29105"/>
    </ligand>
</feature>
<feature type="binding site" evidence="1">
    <location>
        <position position="239"/>
    </location>
    <ligand>
        <name>substrate</name>
    </ligand>
</feature>
<reference key="1">
    <citation type="journal article" date="2004" name="Nature">
        <title>Genome evolution in yeasts.</title>
        <authorList>
            <person name="Dujon B."/>
            <person name="Sherman D."/>
            <person name="Fischer G."/>
            <person name="Durrens P."/>
            <person name="Casaregola S."/>
            <person name="Lafontaine I."/>
            <person name="de Montigny J."/>
            <person name="Marck C."/>
            <person name="Neuveglise C."/>
            <person name="Talla E."/>
            <person name="Goffard N."/>
            <person name="Frangeul L."/>
            <person name="Aigle M."/>
            <person name="Anthouard V."/>
            <person name="Babour A."/>
            <person name="Barbe V."/>
            <person name="Barnay S."/>
            <person name="Blanchin S."/>
            <person name="Beckerich J.-M."/>
            <person name="Beyne E."/>
            <person name="Bleykasten C."/>
            <person name="Boisrame A."/>
            <person name="Boyer J."/>
            <person name="Cattolico L."/>
            <person name="Confanioleri F."/>
            <person name="de Daruvar A."/>
            <person name="Despons L."/>
            <person name="Fabre E."/>
            <person name="Fairhead C."/>
            <person name="Ferry-Dumazet H."/>
            <person name="Groppi A."/>
            <person name="Hantraye F."/>
            <person name="Hennequin C."/>
            <person name="Jauniaux N."/>
            <person name="Joyet P."/>
            <person name="Kachouri R."/>
            <person name="Kerrest A."/>
            <person name="Koszul R."/>
            <person name="Lemaire M."/>
            <person name="Lesur I."/>
            <person name="Ma L."/>
            <person name="Muller H."/>
            <person name="Nicaud J.-M."/>
            <person name="Nikolski M."/>
            <person name="Oztas S."/>
            <person name="Ozier-Kalogeropoulos O."/>
            <person name="Pellenz S."/>
            <person name="Potier S."/>
            <person name="Richard G.-F."/>
            <person name="Straub M.-L."/>
            <person name="Suleau A."/>
            <person name="Swennen D."/>
            <person name="Tekaia F."/>
            <person name="Wesolowski-Louvel M."/>
            <person name="Westhof E."/>
            <person name="Wirth B."/>
            <person name="Zeniou-Meyer M."/>
            <person name="Zivanovic Y."/>
            <person name="Bolotin-Fukuhara M."/>
            <person name="Thierry A."/>
            <person name="Bouchier C."/>
            <person name="Caudron B."/>
            <person name="Scarpelli C."/>
            <person name="Gaillardin C."/>
            <person name="Weissenbach J."/>
            <person name="Wincker P."/>
            <person name="Souciet J.-L."/>
        </authorList>
    </citation>
    <scope>NUCLEOTIDE SEQUENCE [LARGE SCALE GENOMIC DNA]</scope>
    <source>
        <strain>ATCC 36239 / CBS 767 / BCRC 21394 / JCM 1990 / NBRC 0083 / IGC 2968</strain>
    </source>
</reference>
<comment type="function">
    <text evidence="1">Specifically deglycosylates the denatured form of N-linked glycoproteins in the cytoplasm and assists their proteasome-mediated degradation. Cleaves the beta-aspartyl-glucosamine (GlcNAc) of the glycan and the amide side chain of Asn, converting Asn to Asp. Prefers proteins containing high-mannose over those bearing complex type oligosaccharides. Can recognize misfolded proteins in the endoplasmic reticulum that are exported to the cytosol to be destroyed and deglycosylate them, while it has no activity toward native proteins. Deglycosylation is a prerequisite for subsequent proteasome-mediated degradation of some, but not all, misfolded glycoproteins (By similarity).</text>
</comment>
<comment type="catalytic activity">
    <reaction>
        <text>Hydrolysis of an N(4)-(acetyl-beta-D-glucosaminyl)asparagine residue in which the glucosamine residue may be further glycosylated, to yield a (substituted) N-acetyl-beta-D-glucosaminylamine and a peptide containing an aspartate residue.</text>
        <dbReference type="EC" id="3.5.1.52"/>
    </reaction>
</comment>
<comment type="cofactor">
    <cofactor evidence="1">
        <name>Zn(2+)</name>
        <dbReference type="ChEBI" id="CHEBI:29105"/>
    </cofactor>
    <text evidence="1">Binds 1 zinc ion per subunit.</text>
</comment>
<comment type="subcellular location">
    <subcellularLocation>
        <location evidence="1">Cytoplasm</location>
    </subcellularLocation>
</comment>
<comment type="similarity">
    <text evidence="3">Belongs to the transglutaminase-like superfamily. PNGase family.</text>
</comment>
<name>PNG1_DEBHA</name>
<accession>Q6BNI6</accession>
<sequence length="375" mass="43898">MSSQGNKYEYGELADKLILAYSKRRLFKAIGTKRDRQQQFSRLDNKDKRFISKLIDVSNSNEKHKIPSELDIALDCIDLAKIYEGVDKREYERESKAKDPNLIYEDFIVLELLHYFKHDFFKWVNKPECSRCKQSSNNIVPTGNSGPPSINPSEISIIENYKCTKCNIAVSFPRYNNPIKLLETKSGRCGEWVNCFIFILRALLGSQSQIRYVWNHEDHVWCEYYSLGLKRWIHLDPCEGVFDEPNLYCENWGKKMSWCFAFGETYIMDVSDKYITKSDKQINKLESVSSLKNIKEFIDTLNDDKLVRYYSNMALTASDENRNLMRLYQEVILIHNSEKFNKENKIEVSRTHNIPTGRQTGDAEWTKSRGEDGNE</sequence>
<evidence type="ECO:0000250" key="1"/>
<evidence type="ECO:0000256" key="2">
    <source>
        <dbReference type="SAM" id="MobiDB-lite"/>
    </source>
</evidence>
<evidence type="ECO:0000305" key="3"/>
<organism>
    <name type="scientific">Debaryomyces hansenii (strain ATCC 36239 / CBS 767 / BCRC 21394 / JCM 1990 / NBRC 0083 / IGC 2968)</name>
    <name type="common">Yeast</name>
    <name type="synonym">Torulaspora hansenii</name>
    <dbReference type="NCBI Taxonomy" id="284592"/>
    <lineage>
        <taxon>Eukaryota</taxon>
        <taxon>Fungi</taxon>
        <taxon>Dikarya</taxon>
        <taxon>Ascomycota</taxon>
        <taxon>Saccharomycotina</taxon>
        <taxon>Pichiomycetes</taxon>
        <taxon>Debaryomycetaceae</taxon>
        <taxon>Debaryomyces</taxon>
    </lineage>
</organism>
<gene>
    <name type="primary">PNG1</name>
    <name type="ordered locus">DEHA2E21384g</name>
</gene>
<proteinExistence type="inferred from homology"/>